<comment type="function">
    <text evidence="1">One of two assembly initiator proteins, it binds directly to the 5'-end of the 23S rRNA, where it nucleates assembly of the 50S subunit.</text>
</comment>
<comment type="function">
    <text evidence="1">One of the proteins that surrounds the polypeptide exit tunnel on the outside of the subunit.</text>
</comment>
<comment type="subunit">
    <text evidence="1">Part of the 50S ribosomal subunit.</text>
</comment>
<comment type="similarity">
    <text evidence="1">Belongs to the universal ribosomal protein uL24 family.</text>
</comment>
<protein>
    <recommendedName>
        <fullName evidence="1">Large ribosomal subunit protein uL24</fullName>
    </recommendedName>
    <alternativeName>
        <fullName evidence="2">50S ribosomal protein L24</fullName>
    </alternativeName>
</protein>
<name>RL24_SALA4</name>
<accession>B5F7T4</accession>
<gene>
    <name evidence="1" type="primary">rplX</name>
    <name type="ordered locus">SeAg_B3625</name>
</gene>
<proteinExistence type="inferred from homology"/>
<dbReference type="EMBL" id="CP001138">
    <property type="protein sequence ID" value="ACH48728.1"/>
    <property type="molecule type" value="Genomic_DNA"/>
</dbReference>
<dbReference type="RefSeq" id="WP_000729185.1">
    <property type="nucleotide sequence ID" value="NC_011149.1"/>
</dbReference>
<dbReference type="SMR" id="B5F7T4"/>
<dbReference type="GeneID" id="93778678"/>
<dbReference type="KEGG" id="sea:SeAg_B3625"/>
<dbReference type="HOGENOM" id="CLU_093315_2_2_6"/>
<dbReference type="Proteomes" id="UP000008819">
    <property type="component" value="Chromosome"/>
</dbReference>
<dbReference type="GO" id="GO:0005829">
    <property type="term" value="C:cytosol"/>
    <property type="evidence" value="ECO:0007669"/>
    <property type="project" value="UniProtKB-ARBA"/>
</dbReference>
<dbReference type="GO" id="GO:1990904">
    <property type="term" value="C:ribonucleoprotein complex"/>
    <property type="evidence" value="ECO:0007669"/>
    <property type="project" value="UniProtKB-KW"/>
</dbReference>
<dbReference type="GO" id="GO:0005840">
    <property type="term" value="C:ribosome"/>
    <property type="evidence" value="ECO:0007669"/>
    <property type="project" value="UniProtKB-KW"/>
</dbReference>
<dbReference type="GO" id="GO:0019843">
    <property type="term" value="F:rRNA binding"/>
    <property type="evidence" value="ECO:0007669"/>
    <property type="project" value="UniProtKB-UniRule"/>
</dbReference>
<dbReference type="GO" id="GO:0003735">
    <property type="term" value="F:structural constituent of ribosome"/>
    <property type="evidence" value="ECO:0007669"/>
    <property type="project" value="InterPro"/>
</dbReference>
<dbReference type="GO" id="GO:0006412">
    <property type="term" value="P:translation"/>
    <property type="evidence" value="ECO:0007669"/>
    <property type="project" value="UniProtKB-UniRule"/>
</dbReference>
<dbReference type="CDD" id="cd06089">
    <property type="entry name" value="KOW_RPL26"/>
    <property type="match status" value="1"/>
</dbReference>
<dbReference type="FunFam" id="2.30.30.30:FF:000004">
    <property type="entry name" value="50S ribosomal protein L24"/>
    <property type="match status" value="1"/>
</dbReference>
<dbReference type="Gene3D" id="2.30.30.30">
    <property type="match status" value="1"/>
</dbReference>
<dbReference type="HAMAP" id="MF_01326_B">
    <property type="entry name" value="Ribosomal_uL24_B"/>
    <property type="match status" value="1"/>
</dbReference>
<dbReference type="InterPro" id="IPR005824">
    <property type="entry name" value="KOW"/>
</dbReference>
<dbReference type="InterPro" id="IPR014722">
    <property type="entry name" value="Rib_uL2_dom2"/>
</dbReference>
<dbReference type="InterPro" id="IPR003256">
    <property type="entry name" value="Ribosomal_uL24"/>
</dbReference>
<dbReference type="InterPro" id="IPR005825">
    <property type="entry name" value="Ribosomal_uL24_CS"/>
</dbReference>
<dbReference type="InterPro" id="IPR041988">
    <property type="entry name" value="Ribosomal_uL24_KOW"/>
</dbReference>
<dbReference type="InterPro" id="IPR008991">
    <property type="entry name" value="Translation_prot_SH3-like_sf"/>
</dbReference>
<dbReference type="NCBIfam" id="TIGR01079">
    <property type="entry name" value="rplX_bact"/>
    <property type="match status" value="1"/>
</dbReference>
<dbReference type="PANTHER" id="PTHR12903">
    <property type="entry name" value="MITOCHONDRIAL RIBOSOMAL PROTEIN L24"/>
    <property type="match status" value="1"/>
</dbReference>
<dbReference type="Pfam" id="PF00467">
    <property type="entry name" value="KOW"/>
    <property type="match status" value="1"/>
</dbReference>
<dbReference type="Pfam" id="PF17136">
    <property type="entry name" value="ribosomal_L24"/>
    <property type="match status" value="1"/>
</dbReference>
<dbReference type="SMART" id="SM00739">
    <property type="entry name" value="KOW"/>
    <property type="match status" value="1"/>
</dbReference>
<dbReference type="SUPFAM" id="SSF50104">
    <property type="entry name" value="Translation proteins SH3-like domain"/>
    <property type="match status" value="1"/>
</dbReference>
<dbReference type="PROSITE" id="PS01108">
    <property type="entry name" value="RIBOSOMAL_L24"/>
    <property type="match status" value="1"/>
</dbReference>
<keyword id="KW-0687">Ribonucleoprotein</keyword>
<keyword id="KW-0689">Ribosomal protein</keyword>
<keyword id="KW-0694">RNA-binding</keyword>
<keyword id="KW-0699">rRNA-binding</keyword>
<sequence length="104" mass="11316">MAAKIRRDDEVIVLTGKDKGKRGKVKNVLSSGKVIVEGINLVKKHQKPVPALNQPGGIVEKEAAIQVSNVAIFNAATGKADRVGFRFEDGKKVRFFKSNSETIK</sequence>
<reference key="1">
    <citation type="journal article" date="2011" name="J. Bacteriol.">
        <title>Comparative genomics of 28 Salmonella enterica isolates: evidence for CRISPR-mediated adaptive sublineage evolution.</title>
        <authorList>
            <person name="Fricke W.F."/>
            <person name="Mammel M.K."/>
            <person name="McDermott P.F."/>
            <person name="Tartera C."/>
            <person name="White D.G."/>
            <person name="Leclerc J.E."/>
            <person name="Ravel J."/>
            <person name="Cebula T.A."/>
        </authorList>
    </citation>
    <scope>NUCLEOTIDE SEQUENCE [LARGE SCALE GENOMIC DNA]</scope>
    <source>
        <strain>SL483</strain>
    </source>
</reference>
<organism>
    <name type="scientific">Salmonella agona (strain SL483)</name>
    <dbReference type="NCBI Taxonomy" id="454166"/>
    <lineage>
        <taxon>Bacteria</taxon>
        <taxon>Pseudomonadati</taxon>
        <taxon>Pseudomonadota</taxon>
        <taxon>Gammaproteobacteria</taxon>
        <taxon>Enterobacterales</taxon>
        <taxon>Enterobacteriaceae</taxon>
        <taxon>Salmonella</taxon>
    </lineage>
</organism>
<evidence type="ECO:0000255" key="1">
    <source>
        <dbReference type="HAMAP-Rule" id="MF_01326"/>
    </source>
</evidence>
<evidence type="ECO:0000305" key="2"/>
<feature type="chain" id="PRO_1000142031" description="Large ribosomal subunit protein uL24">
    <location>
        <begin position="1"/>
        <end position="104"/>
    </location>
</feature>